<organism>
    <name type="scientific">Rickettsia peacockii (strain Rustic)</name>
    <dbReference type="NCBI Taxonomy" id="562019"/>
    <lineage>
        <taxon>Bacteria</taxon>
        <taxon>Pseudomonadati</taxon>
        <taxon>Pseudomonadota</taxon>
        <taxon>Alphaproteobacteria</taxon>
        <taxon>Rickettsiales</taxon>
        <taxon>Rickettsiaceae</taxon>
        <taxon>Rickettsieae</taxon>
        <taxon>Rickettsia</taxon>
        <taxon>spotted fever group</taxon>
    </lineage>
</organism>
<keyword id="KW-0997">Cell inner membrane</keyword>
<keyword id="KW-1003">Cell membrane</keyword>
<keyword id="KW-0472">Membrane</keyword>
<keyword id="KW-0812">Transmembrane</keyword>
<keyword id="KW-1133">Transmembrane helix</keyword>
<name>YCIB_RICPU</name>
<evidence type="ECO:0000255" key="1">
    <source>
        <dbReference type="HAMAP-Rule" id="MF_00189"/>
    </source>
</evidence>
<gene>
    <name evidence="1" type="primary">yciB</name>
    <name type="ordered locus">RPR_05830</name>
</gene>
<protein>
    <recommendedName>
        <fullName evidence="1">Inner membrane-spanning protein YciB</fullName>
    </recommendedName>
</protein>
<accession>C4K2C9</accession>
<reference key="1">
    <citation type="journal article" date="2009" name="PLoS ONE">
        <title>Genome sequence of the endosymbiont Rickettsia peacockii and comparison with virulent Rickettsia rickettsii: identification of virulence factors.</title>
        <authorList>
            <person name="Felsheim R.F."/>
            <person name="Kurtti T.J."/>
            <person name="Munderloh U.G."/>
        </authorList>
    </citation>
    <scope>NUCLEOTIDE SEQUENCE [LARGE SCALE GENOMIC DNA]</scope>
    <source>
        <strain>Rustic</strain>
    </source>
</reference>
<dbReference type="EMBL" id="CP001227">
    <property type="protein sequence ID" value="ACR47726.1"/>
    <property type="molecule type" value="Genomic_DNA"/>
</dbReference>
<dbReference type="RefSeq" id="WP_004995863.1">
    <property type="nucleotide sequence ID" value="NC_012730.1"/>
</dbReference>
<dbReference type="SMR" id="C4K2C9"/>
<dbReference type="GeneID" id="95362175"/>
<dbReference type="KEGG" id="rpk:RPR_05830"/>
<dbReference type="HOGENOM" id="CLU_089554_1_1_5"/>
<dbReference type="Proteomes" id="UP000005015">
    <property type="component" value="Chromosome"/>
</dbReference>
<dbReference type="GO" id="GO:0005886">
    <property type="term" value="C:plasma membrane"/>
    <property type="evidence" value="ECO:0007669"/>
    <property type="project" value="UniProtKB-SubCell"/>
</dbReference>
<dbReference type="HAMAP" id="MF_00189">
    <property type="entry name" value="YciB"/>
    <property type="match status" value="1"/>
</dbReference>
<dbReference type="InterPro" id="IPR006008">
    <property type="entry name" value="YciB"/>
</dbReference>
<dbReference type="NCBIfam" id="TIGR00997">
    <property type="entry name" value="ispZ"/>
    <property type="match status" value="1"/>
</dbReference>
<dbReference type="NCBIfam" id="NF001323">
    <property type="entry name" value="PRK00259.1-1"/>
    <property type="match status" value="1"/>
</dbReference>
<dbReference type="PANTHER" id="PTHR36917:SF1">
    <property type="entry name" value="INNER MEMBRANE-SPANNING PROTEIN YCIB"/>
    <property type="match status" value="1"/>
</dbReference>
<dbReference type="PANTHER" id="PTHR36917">
    <property type="entry name" value="INTRACELLULAR SEPTATION PROTEIN A-RELATED"/>
    <property type="match status" value="1"/>
</dbReference>
<dbReference type="Pfam" id="PF04279">
    <property type="entry name" value="IspA"/>
    <property type="match status" value="1"/>
</dbReference>
<comment type="function">
    <text evidence="1">Plays a role in cell envelope biogenesis, maintenance of cell envelope integrity and membrane homeostasis.</text>
</comment>
<comment type="subcellular location">
    <subcellularLocation>
        <location evidence="1">Cell inner membrane</location>
        <topology evidence="1">Multi-pass membrane protein</topology>
    </subcellularLocation>
</comment>
<comment type="similarity">
    <text evidence="1">Belongs to the YciB family.</text>
</comment>
<sequence>MLKLLSEIGPVIAFFAGFFYGGGIQHATLYMLITSVICITLCYVIDKKVSKLSIISTTVLLVSGSITLISGDSMYIKIKPTILYVIFGIIFLMSGIRKNPFIKYALESIVRLKEESWITLSYRTAAFFFFMAVVNEVVWRNCSDETWVKFKVFGVIPITFIFILLQLPLLLKNKLPDSKI</sequence>
<feature type="chain" id="PRO_1000203990" description="Inner membrane-spanning protein YciB">
    <location>
        <begin position="1"/>
        <end position="180"/>
    </location>
</feature>
<feature type="transmembrane region" description="Helical" evidence="1">
    <location>
        <begin position="4"/>
        <end position="24"/>
    </location>
</feature>
<feature type="transmembrane region" description="Helical" evidence="1">
    <location>
        <begin position="25"/>
        <end position="45"/>
    </location>
</feature>
<feature type="transmembrane region" description="Helical" evidence="1">
    <location>
        <begin position="49"/>
        <end position="69"/>
    </location>
</feature>
<feature type="transmembrane region" description="Helical" evidence="1">
    <location>
        <begin position="76"/>
        <end position="96"/>
    </location>
</feature>
<feature type="transmembrane region" description="Helical" evidence="1">
    <location>
        <begin position="118"/>
        <end position="138"/>
    </location>
</feature>
<feature type="transmembrane region" description="Helical" evidence="1">
    <location>
        <begin position="150"/>
        <end position="170"/>
    </location>
</feature>
<proteinExistence type="inferred from homology"/>